<organism>
    <name type="scientific">Arabidopsis thaliana</name>
    <name type="common">Mouse-ear cress</name>
    <dbReference type="NCBI Taxonomy" id="3702"/>
    <lineage>
        <taxon>Eukaryota</taxon>
        <taxon>Viridiplantae</taxon>
        <taxon>Streptophyta</taxon>
        <taxon>Embryophyta</taxon>
        <taxon>Tracheophyta</taxon>
        <taxon>Spermatophyta</taxon>
        <taxon>Magnoliopsida</taxon>
        <taxon>eudicotyledons</taxon>
        <taxon>Gunneridae</taxon>
        <taxon>Pentapetalae</taxon>
        <taxon>rosids</taxon>
        <taxon>malvids</taxon>
        <taxon>Brassicales</taxon>
        <taxon>Brassicaceae</taxon>
        <taxon>Camelineae</taxon>
        <taxon>Arabidopsis</taxon>
    </lineage>
</organism>
<proteinExistence type="evidence at transcript level"/>
<feature type="chain" id="PRO_0000440569" description="TIP41-like protein">
    <location>
        <begin position="1"/>
        <end position="290"/>
    </location>
</feature>
<accession>Q8VXY4</accession>
<accession>Q9SYZ2</accession>
<accession>Q9XGU2</accession>
<gene>
    <name evidence="4" type="primary">TIP41L</name>
    <name evidence="6" type="ordered locus">At4g34270</name>
    <name evidence="8" type="ORF">F10M10.40</name>
</gene>
<comment type="function">
    <text evidence="1">May be involved in the regulation of the TOR signaling pathway. Indirectly activates the PP2A phosphatase via interaction with its suppressor TAP46. Could play a role in cytoskeleton functions.</text>
</comment>
<comment type="subunit">
    <text evidence="1">Interacts with TAP46.</text>
</comment>
<comment type="tissue specificity">
    <text evidence="2">Widely expressed.</text>
</comment>
<comment type="developmental stage">
    <text evidence="2">Expressed throughout all development stages.</text>
</comment>
<comment type="miscellaneous">
    <text evidence="3">Considered as a reference gene in terms of expression stability throughout development.</text>
</comment>
<comment type="similarity">
    <text evidence="5">Belongs to the TIP41 family.</text>
</comment>
<comment type="sequence caution" evidence="5">
    <conflict type="erroneous initiation">
        <sequence resource="EMBL-CDS" id="AAD38207"/>
    </conflict>
    <text>Truncated N-terminus.</text>
</comment>
<comment type="sequence caution" evidence="5">
    <conflict type="frameshift">
        <sequence resource="EMBL-CDS" id="AAD38207"/>
    </conflict>
</comment>
<comment type="sequence caution" evidence="5">
    <conflict type="erroneous gene model prediction">
        <sequence resource="EMBL-CDS" id="CAB36704"/>
    </conflict>
</comment>
<comment type="sequence caution" evidence="5">
    <conflict type="erroneous gene model prediction">
        <sequence resource="EMBL-CDS" id="CAB80144"/>
    </conflict>
</comment>
<reference key="1">
    <citation type="journal article" date="1999" name="Nature">
        <title>Sequence and analysis of chromosome 4 of the plant Arabidopsis thaliana.</title>
        <authorList>
            <person name="Mayer K.F.X."/>
            <person name="Schueller C."/>
            <person name="Wambutt R."/>
            <person name="Murphy G."/>
            <person name="Volckaert G."/>
            <person name="Pohl T."/>
            <person name="Duesterhoeft A."/>
            <person name="Stiekema W."/>
            <person name="Entian K.-D."/>
            <person name="Terryn N."/>
            <person name="Harris B."/>
            <person name="Ansorge W."/>
            <person name="Brandt P."/>
            <person name="Grivell L.A."/>
            <person name="Rieger M."/>
            <person name="Weichselgartner M."/>
            <person name="de Simone V."/>
            <person name="Obermaier B."/>
            <person name="Mache R."/>
            <person name="Mueller M."/>
            <person name="Kreis M."/>
            <person name="Delseny M."/>
            <person name="Puigdomenech P."/>
            <person name="Watson M."/>
            <person name="Schmidtheini T."/>
            <person name="Reichert B."/>
            <person name="Portetelle D."/>
            <person name="Perez-Alonso M."/>
            <person name="Boutry M."/>
            <person name="Bancroft I."/>
            <person name="Vos P."/>
            <person name="Hoheisel J."/>
            <person name="Zimmermann W."/>
            <person name="Wedler H."/>
            <person name="Ridley P."/>
            <person name="Langham S.-A."/>
            <person name="McCullagh B."/>
            <person name="Bilham L."/>
            <person name="Robben J."/>
            <person name="van der Schueren J."/>
            <person name="Grymonprez B."/>
            <person name="Chuang Y.-J."/>
            <person name="Vandenbussche F."/>
            <person name="Braeken M."/>
            <person name="Weltjens I."/>
            <person name="Voet M."/>
            <person name="Bastiaens I."/>
            <person name="Aert R."/>
            <person name="Defoor E."/>
            <person name="Weitzenegger T."/>
            <person name="Bothe G."/>
            <person name="Ramsperger U."/>
            <person name="Hilbert H."/>
            <person name="Braun M."/>
            <person name="Holzer E."/>
            <person name="Brandt A."/>
            <person name="Peters S."/>
            <person name="van Staveren M."/>
            <person name="Dirkse W."/>
            <person name="Mooijman P."/>
            <person name="Klein Lankhorst R."/>
            <person name="Rose M."/>
            <person name="Hauf J."/>
            <person name="Koetter P."/>
            <person name="Berneiser S."/>
            <person name="Hempel S."/>
            <person name="Feldpausch M."/>
            <person name="Lamberth S."/>
            <person name="Van den Daele H."/>
            <person name="De Keyser A."/>
            <person name="Buysshaert C."/>
            <person name="Gielen J."/>
            <person name="Villarroel R."/>
            <person name="De Clercq R."/>
            <person name="van Montagu M."/>
            <person name="Rogers J."/>
            <person name="Cronin A."/>
            <person name="Quail M.A."/>
            <person name="Bray-Allen S."/>
            <person name="Clark L."/>
            <person name="Doggett J."/>
            <person name="Hall S."/>
            <person name="Kay M."/>
            <person name="Lennard N."/>
            <person name="McLay K."/>
            <person name="Mayes R."/>
            <person name="Pettett A."/>
            <person name="Rajandream M.A."/>
            <person name="Lyne M."/>
            <person name="Benes V."/>
            <person name="Rechmann S."/>
            <person name="Borkova D."/>
            <person name="Bloecker H."/>
            <person name="Scharfe M."/>
            <person name="Grimm M."/>
            <person name="Loehnert T.-H."/>
            <person name="Dose S."/>
            <person name="de Haan M."/>
            <person name="Maarse A.C."/>
            <person name="Schaefer M."/>
            <person name="Mueller-Auer S."/>
            <person name="Gabel C."/>
            <person name="Fuchs M."/>
            <person name="Fartmann B."/>
            <person name="Granderath K."/>
            <person name="Dauner D."/>
            <person name="Herzl A."/>
            <person name="Neumann S."/>
            <person name="Argiriou A."/>
            <person name="Vitale D."/>
            <person name="Liguori R."/>
            <person name="Piravandi E."/>
            <person name="Massenet O."/>
            <person name="Quigley F."/>
            <person name="Clabauld G."/>
            <person name="Muendlein A."/>
            <person name="Felber R."/>
            <person name="Schnabl S."/>
            <person name="Hiller R."/>
            <person name="Schmidt W."/>
            <person name="Lecharny A."/>
            <person name="Aubourg S."/>
            <person name="Chefdor F."/>
            <person name="Cooke R."/>
            <person name="Berger C."/>
            <person name="Monfort A."/>
            <person name="Casacuberta E."/>
            <person name="Gibbons T."/>
            <person name="Weber N."/>
            <person name="Vandenbol M."/>
            <person name="Bargues M."/>
            <person name="Terol J."/>
            <person name="Torres A."/>
            <person name="Perez-Perez A."/>
            <person name="Purnelle B."/>
            <person name="Bent E."/>
            <person name="Johnson S."/>
            <person name="Tacon D."/>
            <person name="Jesse T."/>
            <person name="Heijnen L."/>
            <person name="Schwarz S."/>
            <person name="Scholler P."/>
            <person name="Heber S."/>
            <person name="Francs P."/>
            <person name="Bielke C."/>
            <person name="Frishman D."/>
            <person name="Haase D."/>
            <person name="Lemcke K."/>
            <person name="Mewes H.-W."/>
            <person name="Stocker S."/>
            <person name="Zaccaria P."/>
            <person name="Bevan M."/>
            <person name="Wilson R.K."/>
            <person name="de la Bastide M."/>
            <person name="Habermann K."/>
            <person name="Parnell L."/>
            <person name="Dedhia N."/>
            <person name="Gnoj L."/>
            <person name="Schutz K."/>
            <person name="Huang E."/>
            <person name="Spiegel L."/>
            <person name="Sekhon M."/>
            <person name="Murray J."/>
            <person name="Sheet P."/>
            <person name="Cordes M."/>
            <person name="Abu-Threideh J."/>
            <person name="Stoneking T."/>
            <person name="Kalicki J."/>
            <person name="Graves T."/>
            <person name="Harmon G."/>
            <person name="Edwards J."/>
            <person name="Latreille P."/>
            <person name="Courtney L."/>
            <person name="Cloud J."/>
            <person name="Abbott A."/>
            <person name="Scott K."/>
            <person name="Johnson D."/>
            <person name="Minx P."/>
            <person name="Bentley D."/>
            <person name="Fulton B."/>
            <person name="Miller N."/>
            <person name="Greco T."/>
            <person name="Kemp K."/>
            <person name="Kramer J."/>
            <person name="Fulton L."/>
            <person name="Mardis E."/>
            <person name="Dante M."/>
            <person name="Pepin K."/>
            <person name="Hillier L.W."/>
            <person name="Nelson J."/>
            <person name="Spieth J."/>
            <person name="Ryan E."/>
            <person name="Andrews S."/>
            <person name="Geisel C."/>
            <person name="Layman D."/>
            <person name="Du H."/>
            <person name="Ali J."/>
            <person name="Berghoff A."/>
            <person name="Jones K."/>
            <person name="Drone K."/>
            <person name="Cotton M."/>
            <person name="Joshu C."/>
            <person name="Antonoiu B."/>
            <person name="Zidanic M."/>
            <person name="Strong C."/>
            <person name="Sun H."/>
            <person name="Lamar B."/>
            <person name="Yordan C."/>
            <person name="Ma P."/>
            <person name="Zhong J."/>
            <person name="Preston R."/>
            <person name="Vil D."/>
            <person name="Shekher M."/>
            <person name="Matero A."/>
            <person name="Shah R."/>
            <person name="Swaby I.K."/>
            <person name="O'Shaughnessy A."/>
            <person name="Rodriguez M."/>
            <person name="Hoffman J."/>
            <person name="Till S."/>
            <person name="Granat S."/>
            <person name="Shohdy N."/>
            <person name="Hasegawa A."/>
            <person name="Hameed A."/>
            <person name="Lodhi M."/>
            <person name="Johnson A."/>
            <person name="Chen E."/>
            <person name="Marra M.A."/>
            <person name="Martienssen R."/>
            <person name="McCombie W.R."/>
        </authorList>
    </citation>
    <scope>NUCLEOTIDE SEQUENCE [LARGE SCALE GENOMIC DNA]</scope>
    <source>
        <strain>cv. Columbia</strain>
    </source>
</reference>
<reference key="2">
    <citation type="journal article" date="2017" name="Plant J.">
        <title>Araport11: a complete reannotation of the Arabidopsis thaliana reference genome.</title>
        <authorList>
            <person name="Cheng C.Y."/>
            <person name="Krishnakumar V."/>
            <person name="Chan A.P."/>
            <person name="Thibaud-Nissen F."/>
            <person name="Schobel S."/>
            <person name="Town C.D."/>
        </authorList>
    </citation>
    <scope>GENOME REANNOTATION</scope>
    <source>
        <strain>cv. Columbia</strain>
    </source>
</reference>
<reference key="3">
    <citation type="journal article" date="2003" name="Science">
        <title>Empirical analysis of transcriptional activity in the Arabidopsis genome.</title>
        <authorList>
            <person name="Yamada K."/>
            <person name="Lim J."/>
            <person name="Dale J.M."/>
            <person name="Chen H."/>
            <person name="Shinn P."/>
            <person name="Palm C.J."/>
            <person name="Southwick A.M."/>
            <person name="Wu H.C."/>
            <person name="Kim C.J."/>
            <person name="Nguyen M."/>
            <person name="Pham P.K."/>
            <person name="Cheuk R.F."/>
            <person name="Karlin-Newmann G."/>
            <person name="Liu S.X."/>
            <person name="Lam B."/>
            <person name="Sakano H."/>
            <person name="Wu T."/>
            <person name="Yu G."/>
            <person name="Miranda M."/>
            <person name="Quach H.L."/>
            <person name="Tripp M."/>
            <person name="Chang C.H."/>
            <person name="Lee J.M."/>
            <person name="Toriumi M.J."/>
            <person name="Chan M.M."/>
            <person name="Tang C.C."/>
            <person name="Onodera C.S."/>
            <person name="Deng J.M."/>
            <person name="Akiyama K."/>
            <person name="Ansari Y."/>
            <person name="Arakawa T."/>
            <person name="Banh J."/>
            <person name="Banno F."/>
            <person name="Bowser L."/>
            <person name="Brooks S.Y."/>
            <person name="Carninci P."/>
            <person name="Chao Q."/>
            <person name="Choy N."/>
            <person name="Enju A."/>
            <person name="Goldsmith A.D."/>
            <person name="Gurjal M."/>
            <person name="Hansen N.F."/>
            <person name="Hayashizaki Y."/>
            <person name="Johnson-Hopson C."/>
            <person name="Hsuan V.W."/>
            <person name="Iida K."/>
            <person name="Karnes M."/>
            <person name="Khan S."/>
            <person name="Koesema E."/>
            <person name="Ishida J."/>
            <person name="Jiang P.X."/>
            <person name="Jones T."/>
            <person name="Kawai J."/>
            <person name="Kamiya A."/>
            <person name="Meyers C."/>
            <person name="Nakajima M."/>
            <person name="Narusaka M."/>
            <person name="Seki M."/>
            <person name="Sakurai T."/>
            <person name="Satou M."/>
            <person name="Tamse R."/>
            <person name="Vaysberg M."/>
            <person name="Wallender E.K."/>
            <person name="Wong C."/>
            <person name="Yamamura Y."/>
            <person name="Yuan S."/>
            <person name="Shinozaki K."/>
            <person name="Davis R.W."/>
            <person name="Theologis A."/>
            <person name="Ecker J.R."/>
        </authorList>
    </citation>
    <scope>NUCLEOTIDE SEQUENCE [LARGE SCALE MRNA]</scope>
    <source>
        <strain>cv. Columbia</strain>
    </source>
</reference>
<reference key="4">
    <citation type="journal article" date="1996" name="Plant J.">
        <title>Identification of plant cytoskeletal, cell cycle-related and polarity-related proteins using Schizosaccharomyces pombe.</title>
        <authorList>
            <person name="Xia G."/>
            <person name="Ramachandran S."/>
            <person name="Hong Y."/>
            <person name="Chan Y.-S."/>
            <person name="Simanis V."/>
            <person name="Chua N.-H."/>
        </authorList>
    </citation>
    <scope>NUCLEOTIDE SEQUENCE [MRNA] OF 1-111</scope>
</reference>
<reference key="5">
    <citation type="journal article" date="2005" name="Plant Physiol.">
        <title>Genome-wide identification and testing of superior reference genes for transcript normalization in Arabidopsis.</title>
        <authorList>
            <person name="Czechowski T."/>
            <person name="Stitt M."/>
            <person name="Altmann T."/>
            <person name="Udvardi M.K."/>
            <person name="Scheible W.R."/>
        </authorList>
    </citation>
    <scope>TISSUE SPECIFICITY</scope>
    <scope>DEVELOPMENTAL STAGE</scope>
</reference>
<reference key="6">
    <citation type="journal article" date="2014" name="Plant Cell Environ.">
        <title>Protein phosphatases PP2A, PP4 and PP6: mediators and regulators in development and responses to environmental cues.</title>
        <authorList>
            <person name="Lillo C."/>
            <person name="Kataya A.R."/>
            <person name="Heidari B."/>
            <person name="Creighton M.T."/>
            <person name="Nemie-Feyissa D."/>
            <person name="Ginbot Z."/>
            <person name="Jonassen E.M."/>
        </authorList>
    </citation>
    <scope>REVIEW</scope>
</reference>
<evidence type="ECO:0000250" key="1">
    <source>
        <dbReference type="UniProtKB" id="Q12199"/>
    </source>
</evidence>
<evidence type="ECO:0000269" key="2">
    <source>
    </source>
</evidence>
<evidence type="ECO:0000303" key="3">
    <source>
    </source>
</evidence>
<evidence type="ECO:0000303" key="4">
    <source>
    </source>
</evidence>
<evidence type="ECO:0000305" key="5"/>
<evidence type="ECO:0000312" key="6">
    <source>
        <dbReference type="Araport" id="AT4G34270"/>
    </source>
</evidence>
<evidence type="ECO:0000312" key="7">
    <source>
        <dbReference type="EMBL" id="AEE86352.1"/>
    </source>
</evidence>
<evidence type="ECO:0000312" key="8">
    <source>
        <dbReference type="EMBL" id="CAB36704.1"/>
    </source>
</evidence>
<protein>
    <recommendedName>
        <fullName evidence="7">TIP41-like protein</fullName>
    </recommendedName>
</protein>
<sequence length="290" mass="33075">METVVDKDVLKSSGAELLPDGRRGLRIHDWEIETLRGTILTSLAVEEWEKKLKTSHLPEMVFGENALVLKHLGSNTKIHFNAFDALAGWKQEGLPPVEVPAAAQWKFRSKPSQQVILDYDYTFTTPYCGSEVVEKDKETVEAKANPKGEATLQWENCEDQIDLAALSLKEPILFYDEVVLYEDELADNGVSLLTVKVRVMPSSWFLLLRFWLRVDGVLMRLRETRMHYRFGEDEAPTVLRENCWREATFQSLSAKGYPVDLAVWSDPSSISQRLPVIKHTTQKLKIPSKV</sequence>
<keyword id="KW-1185">Reference proteome</keyword>
<dbReference type="EMBL" id="AL035521">
    <property type="protein sequence ID" value="CAB36704.1"/>
    <property type="status" value="ALT_SEQ"/>
    <property type="molecule type" value="Genomic_DNA"/>
</dbReference>
<dbReference type="EMBL" id="AL161585">
    <property type="protein sequence ID" value="CAB80144.1"/>
    <property type="status" value="ALT_SEQ"/>
    <property type="molecule type" value="Genomic_DNA"/>
</dbReference>
<dbReference type="EMBL" id="CP002687">
    <property type="protein sequence ID" value="AEE86352.1"/>
    <property type="molecule type" value="Genomic_DNA"/>
</dbReference>
<dbReference type="EMBL" id="AY074349">
    <property type="protein sequence ID" value="AAL67045.1"/>
    <property type="molecule type" value="mRNA"/>
</dbReference>
<dbReference type="EMBL" id="AY091389">
    <property type="protein sequence ID" value="AAM14328.1"/>
    <property type="molecule type" value="mRNA"/>
</dbReference>
<dbReference type="EMBL" id="AF156565">
    <property type="protein sequence ID" value="AAD38207.1"/>
    <property type="status" value="ALT_SEQ"/>
    <property type="molecule type" value="mRNA"/>
</dbReference>
<dbReference type="PIR" id="T04773">
    <property type="entry name" value="T04773"/>
</dbReference>
<dbReference type="RefSeq" id="NP_195153.2">
    <property type="nucleotide sequence ID" value="NM_119592.5"/>
</dbReference>
<dbReference type="SMR" id="Q8VXY4"/>
<dbReference type="FunCoup" id="Q8VXY4">
    <property type="interactions" value="4352"/>
</dbReference>
<dbReference type="STRING" id="3702.Q8VXY4"/>
<dbReference type="PaxDb" id="3702-AT4G34270.1"/>
<dbReference type="ProteomicsDB" id="234303"/>
<dbReference type="DNASU" id="829577"/>
<dbReference type="EnsemblPlants" id="AT4G34270.1">
    <property type="protein sequence ID" value="AT4G34270.1"/>
    <property type="gene ID" value="AT4G34270"/>
</dbReference>
<dbReference type="GeneID" id="829577"/>
<dbReference type="Gramene" id="AT4G34270.1">
    <property type="protein sequence ID" value="AT4G34270.1"/>
    <property type="gene ID" value="AT4G34270"/>
</dbReference>
<dbReference type="KEGG" id="ath:AT4G34270"/>
<dbReference type="Araport" id="AT4G34270"/>
<dbReference type="TAIR" id="AT4G34270">
    <property type="gene designation" value="TIP41"/>
</dbReference>
<dbReference type="eggNOG" id="KOG3224">
    <property type="taxonomic scope" value="Eukaryota"/>
</dbReference>
<dbReference type="HOGENOM" id="CLU_039187_2_0_1"/>
<dbReference type="InParanoid" id="Q8VXY4"/>
<dbReference type="OMA" id="DMILFED"/>
<dbReference type="PhylomeDB" id="Q8VXY4"/>
<dbReference type="PRO" id="PR:Q8VXY4"/>
<dbReference type="Proteomes" id="UP000006548">
    <property type="component" value="Chromosome 4"/>
</dbReference>
<dbReference type="ExpressionAtlas" id="Q8VXY4">
    <property type="expression patterns" value="baseline and differential"/>
</dbReference>
<dbReference type="GO" id="GO:0005737">
    <property type="term" value="C:cytoplasm"/>
    <property type="evidence" value="ECO:0000314"/>
    <property type="project" value="TAIR"/>
</dbReference>
<dbReference type="GO" id="GO:0005634">
    <property type="term" value="C:nucleus"/>
    <property type="evidence" value="ECO:0000314"/>
    <property type="project" value="TAIR"/>
</dbReference>
<dbReference type="GO" id="GO:0031929">
    <property type="term" value="P:TOR signaling"/>
    <property type="evidence" value="ECO:0000315"/>
    <property type="project" value="TAIR"/>
</dbReference>
<dbReference type="InterPro" id="IPR051330">
    <property type="entry name" value="Phosphatase_reg/MetRdx"/>
</dbReference>
<dbReference type="InterPro" id="IPR007303">
    <property type="entry name" value="TIP41-like"/>
</dbReference>
<dbReference type="PANTHER" id="PTHR21021">
    <property type="entry name" value="GAF/PUTATIVE CYTOSKELETAL PROTEIN"/>
    <property type="match status" value="1"/>
</dbReference>
<dbReference type="PANTHER" id="PTHR21021:SF16">
    <property type="entry name" value="TIP41-LIKE PROTEIN"/>
    <property type="match status" value="1"/>
</dbReference>
<dbReference type="Pfam" id="PF04176">
    <property type="entry name" value="TIP41"/>
    <property type="match status" value="1"/>
</dbReference>
<name>TIPRL_ARATH</name>